<reference key="1">
    <citation type="journal article" date="1998" name="Science">
        <title>Genome sequence of the nematode C. elegans: a platform for investigating biology.</title>
        <authorList>
            <consortium name="The C. elegans sequencing consortium"/>
        </authorList>
    </citation>
    <scope>NUCLEOTIDE SEQUENCE [LARGE SCALE GENOMIC DNA]</scope>
    <source>
        <strain>Bristol N2</strain>
    </source>
</reference>
<organism>
    <name type="scientific">Caenorhabditis elegans</name>
    <dbReference type="NCBI Taxonomy" id="6239"/>
    <lineage>
        <taxon>Eukaryota</taxon>
        <taxon>Metazoa</taxon>
        <taxon>Ecdysozoa</taxon>
        <taxon>Nematoda</taxon>
        <taxon>Chromadorea</taxon>
        <taxon>Rhabditida</taxon>
        <taxon>Rhabditina</taxon>
        <taxon>Rhabditomorpha</taxon>
        <taxon>Rhabditoidea</taxon>
        <taxon>Rhabditidae</taxon>
        <taxon>Peloderinae</taxon>
        <taxon>Caenorhabditis</taxon>
    </lineage>
</organism>
<dbReference type="EMBL" id="FO080912">
    <property type="protein sequence ID" value="CCD67736.1"/>
    <property type="molecule type" value="Genomic_DNA"/>
</dbReference>
<dbReference type="PIR" id="B88013">
    <property type="entry name" value="B88013"/>
</dbReference>
<dbReference type="RefSeq" id="NP_493667.1">
    <property type="nucleotide sequence ID" value="NM_061266.2"/>
</dbReference>
<dbReference type="FunCoup" id="O17240">
    <property type="interactions" value="1"/>
</dbReference>
<dbReference type="STRING" id="6239.K10B4.5.1"/>
<dbReference type="PaxDb" id="6239-K10B4.5"/>
<dbReference type="EnsemblMetazoa" id="K10B4.5.1">
    <property type="protein sequence ID" value="K10B4.5.1"/>
    <property type="gene ID" value="WBGene00005081"/>
</dbReference>
<dbReference type="GeneID" id="187251"/>
<dbReference type="KEGG" id="cel:CELE_K10B4.5"/>
<dbReference type="UCSC" id="K10B4.5">
    <property type="organism name" value="c. elegans"/>
</dbReference>
<dbReference type="AGR" id="WB:WBGene00005081"/>
<dbReference type="CTD" id="187251"/>
<dbReference type="WormBase" id="K10B4.5">
    <property type="protein sequence ID" value="CE21069"/>
    <property type="gene ID" value="WBGene00005081"/>
    <property type="gene designation" value="srd-3"/>
</dbReference>
<dbReference type="eggNOG" id="ENOG502TJE0">
    <property type="taxonomic scope" value="Eukaryota"/>
</dbReference>
<dbReference type="GeneTree" id="ENSGT00970000195825"/>
<dbReference type="HOGENOM" id="CLU_057924_3_0_1"/>
<dbReference type="InParanoid" id="O17240"/>
<dbReference type="OMA" id="LIFHGPC"/>
<dbReference type="OrthoDB" id="5789179at2759"/>
<dbReference type="PhylomeDB" id="O17240"/>
<dbReference type="PRO" id="PR:O17240"/>
<dbReference type="Proteomes" id="UP000001940">
    <property type="component" value="Chromosome II"/>
</dbReference>
<dbReference type="Bgee" id="WBGene00005081">
    <property type="expression patterns" value="Expressed in larva"/>
</dbReference>
<dbReference type="GO" id="GO:0016020">
    <property type="term" value="C:membrane"/>
    <property type="evidence" value="ECO:0007669"/>
    <property type="project" value="UniProtKB-SubCell"/>
</dbReference>
<dbReference type="Gene3D" id="1.20.1070.10">
    <property type="entry name" value="Rhodopsin 7-helix transmembrane proteins"/>
    <property type="match status" value="1"/>
</dbReference>
<dbReference type="InterPro" id="IPR019421">
    <property type="entry name" value="7TM_GPCR_serpentine_rcpt_Srd"/>
</dbReference>
<dbReference type="InterPro" id="IPR017452">
    <property type="entry name" value="GPCR_Rhodpsn_7TM"/>
</dbReference>
<dbReference type="InterPro" id="IPR050920">
    <property type="entry name" value="Nematode_rcpt-like_delta"/>
</dbReference>
<dbReference type="PANTHER" id="PTHR22945:SF23">
    <property type="entry name" value="SERPENTINE RECEPTOR CLASS DELTA-1-RELATED"/>
    <property type="match status" value="1"/>
</dbReference>
<dbReference type="PANTHER" id="PTHR22945">
    <property type="entry name" value="SERPENTINE RECEPTOR, CLASS D DELTA"/>
    <property type="match status" value="1"/>
</dbReference>
<dbReference type="Pfam" id="PF10317">
    <property type="entry name" value="7TM_GPCR_Srd"/>
    <property type="match status" value="1"/>
</dbReference>
<dbReference type="SUPFAM" id="SSF81321">
    <property type="entry name" value="Family A G protein-coupled receptor-like"/>
    <property type="match status" value="1"/>
</dbReference>
<sequence length="344" mass="39047">MNATNLQLISHAQKIDHVFKIIGYIVNPLGILFNTLLIILISTKTPKLLQSYSMLHLNFALCDLFSCLAGMLALQKIVFSGWSLTYIFHGACGQISSYFCYFLHVFVCHCLAHSQWILMISFLYRYYILDQISPDTVKIVRICILTYLPSLLFVIVYWSDVANEDALKRIVNSFHPEYIYDSKEIWGDLVIAGNMSCWSAATFSAIVYMTIPCFPIYGVIVFFRHKTLKSLDGRGRITMSETTRSSHKQLIKALTIQAIVPIFWLTASTFYLLALFQVVGRVIVENMPFRIMECMPMITPLISLYFVRPYRSALTGWFFPTSLLKPVIASAMLSSTAASVAPTP</sequence>
<accession>O17240</accession>
<feature type="chain" id="PRO_0000104510" description="Serpentine receptor class delta-3">
    <location>
        <begin position="1"/>
        <end position="344"/>
    </location>
</feature>
<feature type="transmembrane region" description="Helical" evidence="1">
    <location>
        <begin position="21"/>
        <end position="41"/>
    </location>
</feature>
<feature type="transmembrane region" description="Helical" evidence="1">
    <location>
        <begin position="54"/>
        <end position="74"/>
    </location>
</feature>
<feature type="transmembrane region" description="Helical" evidence="1">
    <location>
        <begin position="102"/>
        <end position="122"/>
    </location>
</feature>
<feature type="transmembrane region" description="Helical" evidence="1">
    <location>
        <begin position="142"/>
        <end position="162"/>
    </location>
</feature>
<feature type="transmembrane region" description="Helical" evidence="1">
    <location>
        <begin position="203"/>
        <end position="223"/>
    </location>
</feature>
<feature type="transmembrane region" description="Helical" evidence="1">
    <location>
        <begin position="259"/>
        <end position="279"/>
    </location>
</feature>
<feature type="transmembrane region" description="Helical" evidence="1">
    <location>
        <begin position="287"/>
        <end position="307"/>
    </location>
</feature>
<keyword id="KW-0472">Membrane</keyword>
<keyword id="KW-1185">Reference proteome</keyword>
<keyword id="KW-0812">Transmembrane</keyword>
<keyword id="KW-1133">Transmembrane helix</keyword>
<name>SRD3_CAEEL</name>
<evidence type="ECO:0000255" key="1"/>
<evidence type="ECO:0000305" key="2"/>
<gene>
    <name type="primary">srd-3</name>
    <name type="ORF">K10B4.5</name>
</gene>
<comment type="subcellular location">
    <subcellularLocation>
        <location evidence="2">Membrane</location>
        <topology evidence="2">Multi-pass membrane protein</topology>
    </subcellularLocation>
</comment>
<comment type="similarity">
    <text evidence="2">Belongs to the nematode receptor-like protein srd family.</text>
</comment>
<protein>
    <recommendedName>
        <fullName>Serpentine receptor class delta-3</fullName>
        <shortName>Protein srd-3</shortName>
    </recommendedName>
</protein>
<proteinExistence type="inferred from homology"/>